<accession>A8YXK6</accession>
<name>RL4_LACH4</name>
<keyword id="KW-0687">Ribonucleoprotein</keyword>
<keyword id="KW-0689">Ribosomal protein</keyword>
<keyword id="KW-0694">RNA-binding</keyword>
<keyword id="KW-0699">rRNA-binding</keyword>
<evidence type="ECO:0000255" key="1">
    <source>
        <dbReference type="HAMAP-Rule" id="MF_01328"/>
    </source>
</evidence>
<evidence type="ECO:0000256" key="2">
    <source>
        <dbReference type="SAM" id="MobiDB-lite"/>
    </source>
</evidence>
<evidence type="ECO:0000305" key="3"/>
<dbReference type="EMBL" id="CP000517">
    <property type="protein sequence ID" value="ABX26537.1"/>
    <property type="molecule type" value="Genomic_DNA"/>
</dbReference>
<dbReference type="RefSeq" id="WP_012211377.1">
    <property type="nucleotide sequence ID" value="NC_010080.1"/>
</dbReference>
<dbReference type="SMR" id="A8YXK6"/>
<dbReference type="KEGG" id="lhe:lhv_0313"/>
<dbReference type="eggNOG" id="COG0088">
    <property type="taxonomic scope" value="Bacteria"/>
</dbReference>
<dbReference type="HOGENOM" id="CLU_041575_5_2_9"/>
<dbReference type="Proteomes" id="UP000000790">
    <property type="component" value="Chromosome"/>
</dbReference>
<dbReference type="GO" id="GO:1990904">
    <property type="term" value="C:ribonucleoprotein complex"/>
    <property type="evidence" value="ECO:0007669"/>
    <property type="project" value="UniProtKB-KW"/>
</dbReference>
<dbReference type="GO" id="GO:0005840">
    <property type="term" value="C:ribosome"/>
    <property type="evidence" value="ECO:0007669"/>
    <property type="project" value="UniProtKB-KW"/>
</dbReference>
<dbReference type="GO" id="GO:0019843">
    <property type="term" value="F:rRNA binding"/>
    <property type="evidence" value="ECO:0007669"/>
    <property type="project" value="UniProtKB-UniRule"/>
</dbReference>
<dbReference type="GO" id="GO:0003735">
    <property type="term" value="F:structural constituent of ribosome"/>
    <property type="evidence" value="ECO:0007669"/>
    <property type="project" value="InterPro"/>
</dbReference>
<dbReference type="GO" id="GO:0006412">
    <property type="term" value="P:translation"/>
    <property type="evidence" value="ECO:0007669"/>
    <property type="project" value="UniProtKB-UniRule"/>
</dbReference>
<dbReference type="Gene3D" id="3.40.1370.10">
    <property type="match status" value="1"/>
</dbReference>
<dbReference type="HAMAP" id="MF_01328_B">
    <property type="entry name" value="Ribosomal_uL4_B"/>
    <property type="match status" value="1"/>
</dbReference>
<dbReference type="InterPro" id="IPR002136">
    <property type="entry name" value="Ribosomal_uL4"/>
</dbReference>
<dbReference type="InterPro" id="IPR013005">
    <property type="entry name" value="Ribosomal_uL4-like"/>
</dbReference>
<dbReference type="InterPro" id="IPR023574">
    <property type="entry name" value="Ribosomal_uL4_dom_sf"/>
</dbReference>
<dbReference type="NCBIfam" id="TIGR03953">
    <property type="entry name" value="rplD_bact"/>
    <property type="match status" value="1"/>
</dbReference>
<dbReference type="PANTHER" id="PTHR10746">
    <property type="entry name" value="50S RIBOSOMAL PROTEIN L4"/>
    <property type="match status" value="1"/>
</dbReference>
<dbReference type="PANTHER" id="PTHR10746:SF6">
    <property type="entry name" value="LARGE RIBOSOMAL SUBUNIT PROTEIN UL4M"/>
    <property type="match status" value="1"/>
</dbReference>
<dbReference type="Pfam" id="PF00573">
    <property type="entry name" value="Ribosomal_L4"/>
    <property type="match status" value="1"/>
</dbReference>
<dbReference type="SUPFAM" id="SSF52166">
    <property type="entry name" value="Ribosomal protein L4"/>
    <property type="match status" value="1"/>
</dbReference>
<comment type="function">
    <text evidence="1">One of the primary rRNA binding proteins, this protein initially binds near the 5'-end of the 23S rRNA. It is important during the early stages of 50S assembly. It makes multiple contacts with different domains of the 23S rRNA in the assembled 50S subunit and ribosome.</text>
</comment>
<comment type="function">
    <text evidence="1">Forms part of the polypeptide exit tunnel.</text>
</comment>
<comment type="subunit">
    <text evidence="1">Part of the 50S ribosomal subunit.</text>
</comment>
<comment type="similarity">
    <text evidence="1">Belongs to the universal ribosomal protein uL4 family.</text>
</comment>
<protein>
    <recommendedName>
        <fullName evidence="1">Large ribosomal subunit protein uL4</fullName>
    </recommendedName>
    <alternativeName>
        <fullName evidence="3">50S ribosomal protein L4</fullName>
    </alternativeName>
</protein>
<feature type="chain" id="PRO_1000073270" description="Large ribosomal subunit protein uL4">
    <location>
        <begin position="1"/>
        <end position="205"/>
    </location>
</feature>
<feature type="region of interest" description="Disordered" evidence="2">
    <location>
        <begin position="43"/>
        <end position="96"/>
    </location>
</feature>
<feature type="compositionally biased region" description="Basic residues" evidence="2">
    <location>
        <begin position="51"/>
        <end position="71"/>
    </location>
</feature>
<sequence>MANLKVMDQNGKDSGEVTLNDKVFGIEPNESVVFETIIRQRAGKRQGTSKVKNRSAVRGGGKKPWRQKGTGRARQGSIRSPQWRGGGTVFGPTPRSYAYTMPRKQRRLAIKSVLSQKMIDKDLIVLDKLAMSAPKTKDLVSMLNSLNVDGKVLIVSDDNNVQLSARNLAKVKAVPVNGLNVEDAVNYGKLILTQDAVKKIEEVLA</sequence>
<gene>
    <name evidence="1" type="primary">rplD</name>
    <name type="ordered locus">lhv_0313</name>
</gene>
<proteinExistence type="inferred from homology"/>
<organism>
    <name type="scientific">Lactobacillus helveticus (strain DPC 4571)</name>
    <dbReference type="NCBI Taxonomy" id="405566"/>
    <lineage>
        <taxon>Bacteria</taxon>
        <taxon>Bacillati</taxon>
        <taxon>Bacillota</taxon>
        <taxon>Bacilli</taxon>
        <taxon>Lactobacillales</taxon>
        <taxon>Lactobacillaceae</taxon>
        <taxon>Lactobacillus</taxon>
    </lineage>
</organism>
<reference key="1">
    <citation type="journal article" date="2008" name="J. Bacteriol.">
        <title>Genome sequence of Lactobacillus helveticus: an organism distinguished by selective gene loss and IS element expansion.</title>
        <authorList>
            <person name="Callanan M."/>
            <person name="Kaleta P."/>
            <person name="O'Callaghan J."/>
            <person name="O'Sullivan O."/>
            <person name="Jordan K."/>
            <person name="McAuliffe O."/>
            <person name="Sangrador-Vegas A."/>
            <person name="Slattery L."/>
            <person name="Fitzgerald G.F."/>
            <person name="Beresford T."/>
            <person name="Ross R.P."/>
        </authorList>
    </citation>
    <scope>NUCLEOTIDE SEQUENCE [LARGE SCALE GENOMIC DNA]</scope>
    <source>
        <strain>DPC 4571</strain>
    </source>
</reference>